<feature type="chain" id="PRO_0000356212" description="Keratin-associated protein 19-2">
    <location>
        <begin position="1"/>
        <end position="141"/>
    </location>
</feature>
<feature type="region of interest" description="48 X 2 AA repeats of G-[YCGS]" evidence="2">
    <location>
        <begin position="5"/>
        <end position="135"/>
    </location>
</feature>
<protein>
    <recommendedName>
        <fullName>Keratin-associated protein 19-2</fullName>
    </recommendedName>
    <alternativeName>
        <fullName>Keratin-associated protein 16-1</fullName>
    </alternativeName>
    <alternativeName>
        <fullName evidence="8">Keratin-associated protein 16.1</fullName>
    </alternativeName>
</protein>
<evidence type="ECO:0000250" key="1"/>
<evidence type="ECO:0000255" key="2"/>
<evidence type="ECO:0000269" key="3">
    <source>
    </source>
</evidence>
<evidence type="ECO:0000269" key="4">
    <source>
    </source>
</evidence>
<evidence type="ECO:0000269" key="5">
    <source>
    </source>
</evidence>
<evidence type="ECO:0000305" key="6"/>
<evidence type="ECO:0000312" key="7">
    <source>
        <dbReference type="EMBL" id="AAI15788.1"/>
    </source>
</evidence>
<evidence type="ECO:0000312" key="8">
    <source>
        <dbReference type="EMBL" id="AAK52889.1"/>
    </source>
</evidence>
<evidence type="ECO:0000312" key="9">
    <source>
        <dbReference type="EMBL" id="BAE23486.1"/>
    </source>
</evidence>
<proteinExistence type="evidence at transcript level"/>
<reference evidence="6 8" key="1">
    <citation type="journal article" date="2001" name="Development">
        <title>Overexpression of Hoxc13 in differentiating keratinocytes results in downregulation of a novel hair keratin gene cluster and alopecia.</title>
        <authorList>
            <person name="Tkatchenko A.V."/>
            <person name="Visconti R.P."/>
            <person name="Shang L."/>
            <person name="Papenbrock T."/>
            <person name="Pruett N.D."/>
            <person name="Ito T."/>
            <person name="Ogawa M."/>
            <person name="Awgulewitsch A."/>
        </authorList>
    </citation>
    <scope>NUCLEOTIDE SEQUENCE [MRNA]</scope>
    <scope>INDUCTION</scope>
    <source>
        <strain evidence="8">FVB/NJ</strain>
        <tissue evidence="3">Skin</tissue>
    </source>
</reference>
<reference evidence="7" key="2">
    <citation type="journal article" date="2004" name="Genome Res.">
        <title>The status, quality, and expansion of the NIH full-length cDNA project: the Mammalian Gene Collection (MGC).</title>
        <authorList>
            <consortium name="The MGC Project Team"/>
        </authorList>
    </citation>
    <scope>NUCLEOTIDE SEQUENCE [LARGE SCALE MRNA]</scope>
</reference>
<reference evidence="6 9" key="3">
    <citation type="journal article" date="2005" name="Science">
        <title>The transcriptional landscape of the mammalian genome.</title>
        <authorList>
            <person name="Carninci P."/>
            <person name="Kasukawa T."/>
            <person name="Katayama S."/>
            <person name="Gough J."/>
            <person name="Frith M.C."/>
            <person name="Maeda N."/>
            <person name="Oyama R."/>
            <person name="Ravasi T."/>
            <person name="Lenhard B."/>
            <person name="Wells C."/>
            <person name="Kodzius R."/>
            <person name="Shimokawa K."/>
            <person name="Bajic V.B."/>
            <person name="Brenner S.E."/>
            <person name="Batalov S."/>
            <person name="Forrest A.R."/>
            <person name="Zavolan M."/>
            <person name="Davis M.J."/>
            <person name="Wilming L.G."/>
            <person name="Aidinis V."/>
            <person name="Allen J.E."/>
            <person name="Ambesi-Impiombato A."/>
            <person name="Apweiler R."/>
            <person name="Aturaliya R.N."/>
            <person name="Bailey T.L."/>
            <person name="Bansal M."/>
            <person name="Baxter L."/>
            <person name="Beisel K.W."/>
            <person name="Bersano T."/>
            <person name="Bono H."/>
            <person name="Chalk A.M."/>
            <person name="Chiu K.P."/>
            <person name="Choudhary V."/>
            <person name="Christoffels A."/>
            <person name="Clutterbuck D.R."/>
            <person name="Crowe M.L."/>
            <person name="Dalla E."/>
            <person name="Dalrymple B.P."/>
            <person name="de Bono B."/>
            <person name="Della Gatta G."/>
            <person name="di Bernardo D."/>
            <person name="Down T."/>
            <person name="Engstrom P."/>
            <person name="Fagiolini M."/>
            <person name="Faulkner G."/>
            <person name="Fletcher C.F."/>
            <person name="Fukushima T."/>
            <person name="Furuno M."/>
            <person name="Futaki S."/>
            <person name="Gariboldi M."/>
            <person name="Georgii-Hemming P."/>
            <person name="Gingeras T.R."/>
            <person name="Gojobori T."/>
            <person name="Green R.E."/>
            <person name="Gustincich S."/>
            <person name="Harbers M."/>
            <person name="Hayashi Y."/>
            <person name="Hensch T.K."/>
            <person name="Hirokawa N."/>
            <person name="Hill D."/>
            <person name="Huminiecki L."/>
            <person name="Iacono M."/>
            <person name="Ikeo K."/>
            <person name="Iwama A."/>
            <person name="Ishikawa T."/>
            <person name="Jakt M."/>
            <person name="Kanapin A."/>
            <person name="Katoh M."/>
            <person name="Kawasawa Y."/>
            <person name="Kelso J."/>
            <person name="Kitamura H."/>
            <person name="Kitano H."/>
            <person name="Kollias G."/>
            <person name="Krishnan S.P."/>
            <person name="Kruger A."/>
            <person name="Kummerfeld S.K."/>
            <person name="Kurochkin I.V."/>
            <person name="Lareau L.F."/>
            <person name="Lazarevic D."/>
            <person name="Lipovich L."/>
            <person name="Liu J."/>
            <person name="Liuni S."/>
            <person name="McWilliam S."/>
            <person name="Madan Babu M."/>
            <person name="Madera M."/>
            <person name="Marchionni L."/>
            <person name="Matsuda H."/>
            <person name="Matsuzawa S."/>
            <person name="Miki H."/>
            <person name="Mignone F."/>
            <person name="Miyake S."/>
            <person name="Morris K."/>
            <person name="Mottagui-Tabar S."/>
            <person name="Mulder N."/>
            <person name="Nakano N."/>
            <person name="Nakauchi H."/>
            <person name="Ng P."/>
            <person name="Nilsson R."/>
            <person name="Nishiguchi S."/>
            <person name="Nishikawa S."/>
            <person name="Nori F."/>
            <person name="Ohara O."/>
            <person name="Okazaki Y."/>
            <person name="Orlando V."/>
            <person name="Pang K.C."/>
            <person name="Pavan W.J."/>
            <person name="Pavesi G."/>
            <person name="Pesole G."/>
            <person name="Petrovsky N."/>
            <person name="Piazza S."/>
            <person name="Reed J."/>
            <person name="Reid J.F."/>
            <person name="Ring B.Z."/>
            <person name="Ringwald M."/>
            <person name="Rost B."/>
            <person name="Ruan Y."/>
            <person name="Salzberg S.L."/>
            <person name="Sandelin A."/>
            <person name="Schneider C."/>
            <person name="Schoenbach C."/>
            <person name="Sekiguchi K."/>
            <person name="Semple C.A."/>
            <person name="Seno S."/>
            <person name="Sessa L."/>
            <person name="Sheng Y."/>
            <person name="Shibata Y."/>
            <person name="Shimada H."/>
            <person name="Shimada K."/>
            <person name="Silva D."/>
            <person name="Sinclair B."/>
            <person name="Sperling S."/>
            <person name="Stupka E."/>
            <person name="Sugiura K."/>
            <person name="Sultana R."/>
            <person name="Takenaka Y."/>
            <person name="Taki K."/>
            <person name="Tammoja K."/>
            <person name="Tan S.L."/>
            <person name="Tang S."/>
            <person name="Taylor M.S."/>
            <person name="Tegner J."/>
            <person name="Teichmann S.A."/>
            <person name="Ueda H.R."/>
            <person name="van Nimwegen E."/>
            <person name="Verardo R."/>
            <person name="Wei C.L."/>
            <person name="Yagi K."/>
            <person name="Yamanishi H."/>
            <person name="Zabarovsky E."/>
            <person name="Zhu S."/>
            <person name="Zimmer A."/>
            <person name="Hide W."/>
            <person name="Bult C."/>
            <person name="Grimmond S.M."/>
            <person name="Teasdale R.D."/>
            <person name="Liu E.T."/>
            <person name="Brusic V."/>
            <person name="Quackenbush J."/>
            <person name="Wahlestedt C."/>
            <person name="Mattick J.S."/>
            <person name="Hume D.A."/>
            <person name="Kai C."/>
            <person name="Sasaki D."/>
            <person name="Tomaru Y."/>
            <person name="Fukuda S."/>
            <person name="Kanamori-Katayama M."/>
            <person name="Suzuki M."/>
            <person name="Aoki J."/>
            <person name="Arakawa T."/>
            <person name="Iida J."/>
            <person name="Imamura K."/>
            <person name="Itoh M."/>
            <person name="Kato T."/>
            <person name="Kawaji H."/>
            <person name="Kawagashira N."/>
            <person name="Kawashima T."/>
            <person name="Kojima M."/>
            <person name="Kondo S."/>
            <person name="Konno H."/>
            <person name="Nakano K."/>
            <person name="Ninomiya N."/>
            <person name="Nishio T."/>
            <person name="Okada M."/>
            <person name="Plessy C."/>
            <person name="Shibata K."/>
            <person name="Shiraki T."/>
            <person name="Suzuki S."/>
            <person name="Tagami M."/>
            <person name="Waki K."/>
            <person name="Watahiki A."/>
            <person name="Okamura-Oho Y."/>
            <person name="Suzuki H."/>
            <person name="Kawai J."/>
            <person name="Hayashizaki Y."/>
        </authorList>
    </citation>
    <scope>NUCLEOTIDE SEQUENCE [LARGE SCALE MRNA] OF 98-141</scope>
    <source>
        <strain evidence="9">C57BL/6J</strain>
        <tissue evidence="9">Neonatal skin</tissue>
    </source>
</reference>
<reference evidence="6" key="4">
    <citation type="journal article" date="2004" name="J. Biol. Chem.">
        <title>Krtap16, characterization of a new hair keratin-associated protein (KAP) gene complex on mouse chromosome 16 and evidence for regulation by Hoxc13.</title>
        <authorList>
            <person name="Pruett N.D."/>
            <person name="Tkatchenko T.V."/>
            <person name="Jave-Suarez L."/>
            <person name="Jacobs D.F."/>
            <person name="Potter C.S."/>
            <person name="Tkatchenko A.V."/>
            <person name="Schweizer J."/>
            <person name="Awgulewitsch A."/>
        </authorList>
    </citation>
    <scope>TISSUE SPECIFICITY</scope>
</reference>
<reference evidence="6" key="5">
    <citation type="journal article" date="2007" name="Development">
        <title>Transcriptome and phenotypic analysis reveals Gata3-dependent signalling pathways in murine hair follicles.</title>
        <authorList>
            <person name="Kurek D."/>
            <person name="Garinis G.A."/>
            <person name="van Doorninck J.H."/>
            <person name="van der Wees J."/>
            <person name="Grosveld F.G."/>
        </authorList>
    </citation>
    <scope>INDUCTION</scope>
</reference>
<sequence>MSYYSGYSGGLGYGYGSSFGGLGCGCNSIRRLGCGSGYGGFGYGSGYGGFGGFGYGSGYGGYGYGSGYGGFGGFGYGSGYGGFGYGSGYGGFGGFGYGSGYGGYGYGSGFGGYGYGSGFRGYGCGCRRSSCCGGYGFSSFY</sequence>
<gene>
    <name type="primary">Krtap19-2</name>
    <name type="synonym">Krtap16-1</name>
    <name evidence="8" type="synonym">Krtap16.1</name>
</gene>
<keyword id="KW-0416">Keratin</keyword>
<keyword id="KW-1185">Reference proteome</keyword>
<keyword id="KW-0677">Repeat</keyword>
<comment type="function">
    <text evidence="6">In the hair cortex, hair keratin intermediate filaments are embedded in an interfilamentous matrix, consisting of hair keratin-associated proteins (KRTAP), which are essential for the formation of a rigid and resistant hair shaft through their extensive disulfide bond cross-linking with abundant cysteine residues of hair keratins. The matrix proteins include the high-sulfur and high-glycine-tyrosine keratins.</text>
</comment>
<comment type="subunit">
    <text evidence="1">Interacts with hair keratins.</text>
</comment>
<comment type="tissue specificity">
    <text evidence="4">Strong expression in narrowly defined pattern restricted to the lower and middle cortical regions of the hair shaft in both developing and cycling hair. During hair follicle regression (catagen), expression levels decrease until expression is no longer detectable in follicles at resting stage (telogen).</text>
</comment>
<comment type="induction">
    <text evidence="3 5">Expression in skin and hair follicle is regulated by HOXC13 and by GATA3.</text>
</comment>
<comment type="similarity">
    <text evidence="6">Belongs to the KRTAP type 19 family.</text>
</comment>
<dbReference type="EMBL" id="AF345291">
    <property type="protein sequence ID" value="AAK52889.1"/>
    <property type="molecule type" value="mRNA"/>
</dbReference>
<dbReference type="EMBL" id="BC115787">
    <property type="protein sequence ID" value="AAI15788.1"/>
    <property type="molecule type" value="mRNA"/>
</dbReference>
<dbReference type="EMBL" id="BC115815">
    <property type="protein sequence ID" value="AAI15816.1"/>
    <property type="molecule type" value="mRNA"/>
</dbReference>
<dbReference type="EMBL" id="AK137740">
    <property type="protein sequence ID" value="BAE23486.1"/>
    <property type="molecule type" value="mRNA"/>
</dbReference>
<dbReference type="CCDS" id="CCDS28304.1"/>
<dbReference type="RefSeq" id="NP_570940.1">
    <property type="nucleotide sequence ID" value="NM_130870.1"/>
</dbReference>
<dbReference type="FunCoup" id="Q925I0">
    <property type="interactions" value="53"/>
</dbReference>
<dbReference type="STRING" id="10090.ENSMUSP00000075543"/>
<dbReference type="PaxDb" id="10090-ENSMUSP00000075543"/>
<dbReference type="ProteomicsDB" id="263565"/>
<dbReference type="Ensembl" id="ENSMUST00000076186.4">
    <property type="protein sequence ID" value="ENSMUSP00000075543.3"/>
    <property type="gene ID" value="ENSMUSG00000057650.4"/>
</dbReference>
<dbReference type="GeneID" id="170651"/>
<dbReference type="KEGG" id="mmu:170651"/>
<dbReference type="UCSC" id="uc007zvi.1">
    <property type="organism name" value="mouse"/>
</dbReference>
<dbReference type="AGR" id="MGI:2157572"/>
<dbReference type="CTD" id="337969"/>
<dbReference type="MGI" id="MGI:2157572">
    <property type="gene designation" value="Krtap19-2"/>
</dbReference>
<dbReference type="VEuPathDB" id="HostDB:ENSMUSG00000057650"/>
<dbReference type="GeneTree" id="ENSGT00950000184870"/>
<dbReference type="HOGENOM" id="CLU_1824686_0_0_1"/>
<dbReference type="InParanoid" id="Q925I0"/>
<dbReference type="OMA" id="YRYGMIG"/>
<dbReference type="Reactome" id="R-MMU-6805567">
    <property type="pathway name" value="Keratinization"/>
</dbReference>
<dbReference type="BioGRID-ORCS" id="170651">
    <property type="hits" value="1 hit in 22 CRISPR screens"/>
</dbReference>
<dbReference type="PRO" id="PR:Q925I0"/>
<dbReference type="Proteomes" id="UP000000589">
    <property type="component" value="Chromosome 16"/>
</dbReference>
<dbReference type="RNAct" id="Q925I0">
    <property type="molecule type" value="protein"/>
</dbReference>
<dbReference type="Bgee" id="ENSMUSG00000057650">
    <property type="expression patterns" value="Expressed in lip and 9 other cell types or tissues"/>
</dbReference>
<dbReference type="GO" id="GO:0005882">
    <property type="term" value="C:intermediate filament"/>
    <property type="evidence" value="ECO:0007669"/>
    <property type="project" value="UniProtKB-KW"/>
</dbReference>
<dbReference type="InterPro" id="IPR051528">
    <property type="entry name" value="KRTAP_type_19"/>
</dbReference>
<dbReference type="PANTHER" id="PTHR38140">
    <property type="entry name" value="KERATIN-ASSOCIATED PROTEIN 19-3-RELATED"/>
    <property type="match status" value="1"/>
</dbReference>
<dbReference type="PANTHER" id="PTHR38140:SF5">
    <property type="entry name" value="KERATIN-ASSOCIATED PROTEIN 19-4-RELATED"/>
    <property type="match status" value="1"/>
</dbReference>
<name>KR192_MOUSE</name>
<accession>Q925I0</accession>
<accession>Q3UUY7</accession>
<organism>
    <name type="scientific">Mus musculus</name>
    <name type="common">Mouse</name>
    <dbReference type="NCBI Taxonomy" id="10090"/>
    <lineage>
        <taxon>Eukaryota</taxon>
        <taxon>Metazoa</taxon>
        <taxon>Chordata</taxon>
        <taxon>Craniata</taxon>
        <taxon>Vertebrata</taxon>
        <taxon>Euteleostomi</taxon>
        <taxon>Mammalia</taxon>
        <taxon>Eutheria</taxon>
        <taxon>Euarchontoglires</taxon>
        <taxon>Glires</taxon>
        <taxon>Rodentia</taxon>
        <taxon>Myomorpha</taxon>
        <taxon>Muroidea</taxon>
        <taxon>Muridae</taxon>
        <taxon>Murinae</taxon>
        <taxon>Mus</taxon>
        <taxon>Mus</taxon>
    </lineage>
</organism>